<sequence length="104" mass="12159">MVLTKAEISDYLFHKLELSKQNIKDLVEIFFEEVRKSLELGESVKLSGFGNFYLRDKKQRPGRNPKTGEYIPISARRVVVFKPGQKLRSRVESFKDIKKEKDIV</sequence>
<organism>
    <name type="scientific">Buchnera aphidicola subsp. Cinara cedri (strain Cc)</name>
    <dbReference type="NCBI Taxonomy" id="372461"/>
    <lineage>
        <taxon>Bacteria</taxon>
        <taxon>Pseudomonadati</taxon>
        <taxon>Pseudomonadota</taxon>
        <taxon>Gammaproteobacteria</taxon>
        <taxon>Enterobacterales</taxon>
        <taxon>Erwiniaceae</taxon>
        <taxon>Buchnera</taxon>
    </lineage>
</organism>
<dbReference type="EMBL" id="CP000263">
    <property type="protein sequence ID" value="ABJ90561.1"/>
    <property type="molecule type" value="Genomic_DNA"/>
</dbReference>
<dbReference type="RefSeq" id="WP_011672480.1">
    <property type="nucleotide sequence ID" value="NC_008513.1"/>
</dbReference>
<dbReference type="SMR" id="Q057Y8"/>
<dbReference type="STRING" id="372461.BCc_084"/>
<dbReference type="KEGG" id="bcc:BCc_084"/>
<dbReference type="eggNOG" id="COG0776">
    <property type="taxonomic scope" value="Bacteria"/>
</dbReference>
<dbReference type="HOGENOM" id="CLU_105066_1_3_6"/>
<dbReference type="OrthoDB" id="9797747at2"/>
<dbReference type="Proteomes" id="UP000000669">
    <property type="component" value="Chromosome"/>
</dbReference>
<dbReference type="GO" id="GO:0005829">
    <property type="term" value="C:cytosol"/>
    <property type="evidence" value="ECO:0007669"/>
    <property type="project" value="TreeGrafter"/>
</dbReference>
<dbReference type="GO" id="GO:0003677">
    <property type="term" value="F:DNA binding"/>
    <property type="evidence" value="ECO:0007669"/>
    <property type="project" value="UniProtKB-UniRule"/>
</dbReference>
<dbReference type="GO" id="GO:0030527">
    <property type="term" value="F:structural constituent of chromatin"/>
    <property type="evidence" value="ECO:0007669"/>
    <property type="project" value="InterPro"/>
</dbReference>
<dbReference type="GO" id="GO:0006310">
    <property type="term" value="P:DNA recombination"/>
    <property type="evidence" value="ECO:0007669"/>
    <property type="project" value="UniProtKB-UniRule"/>
</dbReference>
<dbReference type="GO" id="GO:0009893">
    <property type="term" value="P:positive regulation of metabolic process"/>
    <property type="evidence" value="ECO:0007669"/>
    <property type="project" value="UniProtKB-ARBA"/>
</dbReference>
<dbReference type="GO" id="GO:0006355">
    <property type="term" value="P:regulation of DNA-templated transcription"/>
    <property type="evidence" value="ECO:0007669"/>
    <property type="project" value="UniProtKB-UniRule"/>
</dbReference>
<dbReference type="GO" id="GO:0006417">
    <property type="term" value="P:regulation of translation"/>
    <property type="evidence" value="ECO:0007669"/>
    <property type="project" value="UniProtKB-UniRule"/>
</dbReference>
<dbReference type="CDD" id="cd13835">
    <property type="entry name" value="IHF_A"/>
    <property type="match status" value="1"/>
</dbReference>
<dbReference type="FunFam" id="4.10.520.10:FF:000002">
    <property type="entry name" value="Integration host factor subunit alpha"/>
    <property type="match status" value="1"/>
</dbReference>
<dbReference type="Gene3D" id="4.10.520.10">
    <property type="entry name" value="IHF-like DNA-binding proteins"/>
    <property type="match status" value="1"/>
</dbReference>
<dbReference type="HAMAP" id="MF_00380">
    <property type="entry name" value="IHF_alpha"/>
    <property type="match status" value="1"/>
</dbReference>
<dbReference type="InterPro" id="IPR000119">
    <property type="entry name" value="Hist_DNA-bd"/>
</dbReference>
<dbReference type="InterPro" id="IPR020816">
    <property type="entry name" value="Histone-like_DNA-bd_CS"/>
</dbReference>
<dbReference type="InterPro" id="IPR010992">
    <property type="entry name" value="IHF-like_DNA-bd_dom_sf"/>
</dbReference>
<dbReference type="InterPro" id="IPR005684">
    <property type="entry name" value="IHF_alpha"/>
</dbReference>
<dbReference type="NCBIfam" id="TIGR00987">
    <property type="entry name" value="himA"/>
    <property type="match status" value="1"/>
</dbReference>
<dbReference type="NCBIfam" id="NF001401">
    <property type="entry name" value="PRK00285.1"/>
    <property type="match status" value="1"/>
</dbReference>
<dbReference type="PANTHER" id="PTHR33175">
    <property type="entry name" value="DNA-BINDING PROTEIN HU"/>
    <property type="match status" value="1"/>
</dbReference>
<dbReference type="PANTHER" id="PTHR33175:SF2">
    <property type="entry name" value="INTEGRATION HOST FACTOR SUBUNIT ALPHA"/>
    <property type="match status" value="1"/>
</dbReference>
<dbReference type="Pfam" id="PF00216">
    <property type="entry name" value="Bac_DNA_binding"/>
    <property type="match status" value="1"/>
</dbReference>
<dbReference type="PRINTS" id="PR01727">
    <property type="entry name" value="DNABINDINGHU"/>
</dbReference>
<dbReference type="SMART" id="SM00411">
    <property type="entry name" value="BHL"/>
    <property type="match status" value="1"/>
</dbReference>
<dbReference type="SUPFAM" id="SSF47729">
    <property type="entry name" value="IHF-like DNA-binding proteins"/>
    <property type="match status" value="1"/>
</dbReference>
<dbReference type="PROSITE" id="PS00045">
    <property type="entry name" value="HISTONE_LIKE"/>
    <property type="match status" value="1"/>
</dbReference>
<comment type="function">
    <text evidence="1">This protein is one of the two subunits of integration host factor, a specific DNA-binding protein that functions in genetic recombination as well as in transcriptional and translational control.</text>
</comment>
<comment type="subunit">
    <text evidence="1">Heterodimer of an alpha and a beta chain.</text>
</comment>
<comment type="similarity">
    <text evidence="1">Belongs to the bacterial histone-like protein family.</text>
</comment>
<proteinExistence type="inferred from homology"/>
<name>IHFA_BUCCC</name>
<protein>
    <recommendedName>
        <fullName evidence="1">Integration host factor subunit alpha</fullName>
        <shortName evidence="1">IHF-alpha</shortName>
    </recommendedName>
</protein>
<accession>Q057Y8</accession>
<reference key="1">
    <citation type="journal article" date="2006" name="Science">
        <title>A small microbial genome: the end of a long symbiotic relationship?</title>
        <authorList>
            <person name="Perez-Brocal V."/>
            <person name="Gil R."/>
            <person name="Ramos S."/>
            <person name="Lamelas A."/>
            <person name="Postigo M."/>
            <person name="Michelena J.M."/>
            <person name="Silva F.J."/>
            <person name="Moya A."/>
            <person name="Latorre A."/>
        </authorList>
    </citation>
    <scope>NUCLEOTIDE SEQUENCE [LARGE SCALE GENOMIC DNA]</scope>
    <source>
        <strain>Cc</strain>
    </source>
</reference>
<evidence type="ECO:0000255" key="1">
    <source>
        <dbReference type="HAMAP-Rule" id="MF_00380"/>
    </source>
</evidence>
<keyword id="KW-0233">DNA recombination</keyword>
<keyword id="KW-0238">DNA-binding</keyword>
<keyword id="KW-1185">Reference proteome</keyword>
<keyword id="KW-0804">Transcription</keyword>
<keyword id="KW-0805">Transcription regulation</keyword>
<keyword id="KW-0810">Translation regulation</keyword>
<gene>
    <name evidence="1" type="primary">ihfA</name>
    <name evidence="1" type="synonym">himA</name>
    <name type="ordered locus">BCc_084</name>
</gene>
<feature type="chain" id="PRO_0000277720" description="Integration host factor subunit alpha">
    <location>
        <begin position="1"/>
        <end position="104"/>
    </location>
</feature>